<keyword id="KW-0028">Amino-acid biosynthesis</keyword>
<keyword id="KW-0057">Aromatic amino acid biosynthesis</keyword>
<keyword id="KW-0170">Cobalt</keyword>
<keyword id="KW-0963">Cytoplasm</keyword>
<keyword id="KW-0456">Lyase</keyword>
<keyword id="KW-0479">Metal-binding</keyword>
<keyword id="KW-0520">NAD</keyword>
<keyword id="KW-0547">Nucleotide-binding</keyword>
<keyword id="KW-0862">Zinc</keyword>
<evidence type="ECO:0000255" key="1">
    <source>
        <dbReference type="HAMAP-Rule" id="MF_00110"/>
    </source>
</evidence>
<comment type="function">
    <text evidence="1">Catalyzes the conversion of 3-deoxy-D-arabino-heptulosonate 7-phosphate (DAHP) to dehydroquinate (DHQ).</text>
</comment>
<comment type="catalytic activity">
    <reaction evidence="1">
        <text>7-phospho-2-dehydro-3-deoxy-D-arabino-heptonate = 3-dehydroquinate + phosphate</text>
        <dbReference type="Rhea" id="RHEA:21968"/>
        <dbReference type="ChEBI" id="CHEBI:32364"/>
        <dbReference type="ChEBI" id="CHEBI:43474"/>
        <dbReference type="ChEBI" id="CHEBI:58394"/>
        <dbReference type="EC" id="4.2.3.4"/>
    </reaction>
</comment>
<comment type="cofactor">
    <cofactor evidence="1">
        <name>Co(2+)</name>
        <dbReference type="ChEBI" id="CHEBI:48828"/>
    </cofactor>
    <cofactor evidence="1">
        <name>Zn(2+)</name>
        <dbReference type="ChEBI" id="CHEBI:29105"/>
    </cofactor>
    <text evidence="1">Binds 1 divalent metal cation per subunit. Can use either Co(2+) or Zn(2+).</text>
</comment>
<comment type="cofactor">
    <cofactor evidence="1">
        <name>NAD(+)</name>
        <dbReference type="ChEBI" id="CHEBI:57540"/>
    </cofactor>
</comment>
<comment type="pathway">
    <text evidence="1">Metabolic intermediate biosynthesis; chorismate biosynthesis; chorismate from D-erythrose 4-phosphate and phosphoenolpyruvate: step 2/7.</text>
</comment>
<comment type="subcellular location">
    <subcellularLocation>
        <location evidence="1">Cytoplasm</location>
    </subcellularLocation>
</comment>
<comment type="similarity">
    <text evidence="1">Belongs to the sugar phosphate cyclases superfamily. Dehydroquinate synthase family.</text>
</comment>
<organism>
    <name type="scientific">Endomicrobium trichonymphae</name>
    <dbReference type="NCBI Taxonomy" id="1408204"/>
    <lineage>
        <taxon>Bacteria</taxon>
        <taxon>Pseudomonadati</taxon>
        <taxon>Elusimicrobiota</taxon>
        <taxon>Endomicrobiia</taxon>
        <taxon>Endomicrobiales</taxon>
        <taxon>Endomicrobiaceae</taxon>
        <taxon>Candidatus Endomicrobiellum</taxon>
    </lineage>
</organism>
<dbReference type="EC" id="4.2.3.4" evidence="1"/>
<dbReference type="EMBL" id="AP009510">
    <property type="protein sequence ID" value="BAG13676.1"/>
    <property type="molecule type" value="Genomic_DNA"/>
</dbReference>
<dbReference type="RefSeq" id="WP_015423204.1">
    <property type="nucleotide sequence ID" value="NC_020419.1"/>
</dbReference>
<dbReference type="SMR" id="B1GZJ4"/>
<dbReference type="STRING" id="471821.TGRD_193"/>
<dbReference type="KEGG" id="eti:RSTT_170"/>
<dbReference type="KEGG" id="rsd:TGRD_193"/>
<dbReference type="PATRIC" id="fig|471821.5.peg.293"/>
<dbReference type="HOGENOM" id="CLU_001201_0_2_0"/>
<dbReference type="OrthoDB" id="9806583at2"/>
<dbReference type="UniPathway" id="UPA00053">
    <property type="reaction ID" value="UER00085"/>
</dbReference>
<dbReference type="Proteomes" id="UP000001691">
    <property type="component" value="Chromosome"/>
</dbReference>
<dbReference type="GO" id="GO:0005737">
    <property type="term" value="C:cytoplasm"/>
    <property type="evidence" value="ECO:0007669"/>
    <property type="project" value="UniProtKB-SubCell"/>
</dbReference>
<dbReference type="GO" id="GO:0003856">
    <property type="term" value="F:3-dehydroquinate synthase activity"/>
    <property type="evidence" value="ECO:0007669"/>
    <property type="project" value="UniProtKB-UniRule"/>
</dbReference>
<dbReference type="GO" id="GO:0046872">
    <property type="term" value="F:metal ion binding"/>
    <property type="evidence" value="ECO:0007669"/>
    <property type="project" value="UniProtKB-KW"/>
</dbReference>
<dbReference type="GO" id="GO:0000166">
    <property type="term" value="F:nucleotide binding"/>
    <property type="evidence" value="ECO:0007669"/>
    <property type="project" value="UniProtKB-KW"/>
</dbReference>
<dbReference type="GO" id="GO:0008652">
    <property type="term" value="P:amino acid biosynthetic process"/>
    <property type="evidence" value="ECO:0007669"/>
    <property type="project" value="UniProtKB-KW"/>
</dbReference>
<dbReference type="GO" id="GO:0009073">
    <property type="term" value="P:aromatic amino acid family biosynthetic process"/>
    <property type="evidence" value="ECO:0007669"/>
    <property type="project" value="UniProtKB-KW"/>
</dbReference>
<dbReference type="GO" id="GO:0009423">
    <property type="term" value="P:chorismate biosynthetic process"/>
    <property type="evidence" value="ECO:0007669"/>
    <property type="project" value="UniProtKB-UniRule"/>
</dbReference>
<dbReference type="CDD" id="cd08195">
    <property type="entry name" value="DHQS"/>
    <property type="match status" value="1"/>
</dbReference>
<dbReference type="FunFam" id="3.40.50.1970:FF:000007">
    <property type="entry name" value="Pentafunctional AROM polypeptide"/>
    <property type="match status" value="1"/>
</dbReference>
<dbReference type="Gene3D" id="3.40.50.1970">
    <property type="match status" value="1"/>
</dbReference>
<dbReference type="Gene3D" id="1.20.1090.10">
    <property type="entry name" value="Dehydroquinate synthase-like - alpha domain"/>
    <property type="match status" value="1"/>
</dbReference>
<dbReference type="HAMAP" id="MF_00110">
    <property type="entry name" value="DHQ_synthase"/>
    <property type="match status" value="1"/>
</dbReference>
<dbReference type="InterPro" id="IPR050071">
    <property type="entry name" value="Dehydroquinate_synthase"/>
</dbReference>
<dbReference type="InterPro" id="IPR016037">
    <property type="entry name" value="DHQ_synth_AroB"/>
</dbReference>
<dbReference type="InterPro" id="IPR030963">
    <property type="entry name" value="DHQ_synth_fam"/>
</dbReference>
<dbReference type="InterPro" id="IPR030960">
    <property type="entry name" value="DHQS/DOIS_N"/>
</dbReference>
<dbReference type="InterPro" id="IPR056179">
    <property type="entry name" value="DHQS_C"/>
</dbReference>
<dbReference type="NCBIfam" id="TIGR01357">
    <property type="entry name" value="aroB"/>
    <property type="match status" value="1"/>
</dbReference>
<dbReference type="PANTHER" id="PTHR43622">
    <property type="entry name" value="3-DEHYDROQUINATE SYNTHASE"/>
    <property type="match status" value="1"/>
</dbReference>
<dbReference type="PANTHER" id="PTHR43622:SF7">
    <property type="entry name" value="3-DEHYDROQUINATE SYNTHASE, CHLOROPLASTIC"/>
    <property type="match status" value="1"/>
</dbReference>
<dbReference type="Pfam" id="PF01761">
    <property type="entry name" value="DHQ_synthase"/>
    <property type="match status" value="1"/>
</dbReference>
<dbReference type="Pfam" id="PF24621">
    <property type="entry name" value="DHQS_C"/>
    <property type="match status" value="1"/>
</dbReference>
<dbReference type="PIRSF" id="PIRSF001455">
    <property type="entry name" value="DHQ_synth"/>
    <property type="match status" value="1"/>
</dbReference>
<dbReference type="SUPFAM" id="SSF56796">
    <property type="entry name" value="Dehydroquinate synthase-like"/>
    <property type="match status" value="1"/>
</dbReference>
<name>AROB_ENDTX</name>
<reference key="1">
    <citation type="journal article" date="2008" name="Proc. Natl. Acad. Sci. U.S.A.">
        <title>Complete genome of the uncultured termite group 1 bacteria in a single host protist cell.</title>
        <authorList>
            <person name="Hongoh Y."/>
            <person name="Sharma V.K."/>
            <person name="Prakash T."/>
            <person name="Noda S."/>
            <person name="Taylor T.D."/>
            <person name="Kudo T."/>
            <person name="Sakaki Y."/>
            <person name="Toyoda A."/>
            <person name="Hattori M."/>
            <person name="Ohkuma M."/>
        </authorList>
    </citation>
    <scope>NUCLEOTIDE SEQUENCE [LARGE SCALE GENOMIC DNA]</scope>
</reference>
<sequence>MKQIIVNLKTKKYDIVISQSENDFFTALAKAAKTNMFFVITDKNVEKLHLKYFTVLLKRKGFNVKTAVISAGEIGKNIKSLSFLYDKALEAGIDRKSCAIALGGGVIGDVAGFFAATYMRGINYIQVPTTLLAMTDSSVGGKTAVNIKGGKNIAGVFYQPDLVWINSAFLSTLTERHIKNGLAEIIKYAFTFDKKFYSYLSDTLENGTVPPKDFEYIIYQSCSYKARVVEKDEKEITGLRAVLNFGHTFAHALETATKYKKFLHGEAVAVGMLFAVKLSLKLRICKPETYKEVENLLQKADFTLSTKNNARQMLSLMKKDKKSIDGNIKFILIKDIGKAVSTYVKDNVVLNVLKNFTGENK</sequence>
<feature type="chain" id="PRO_1000094650" description="3-dehydroquinate synthase">
    <location>
        <begin position="1"/>
        <end position="361"/>
    </location>
</feature>
<feature type="binding site" evidence="1">
    <location>
        <begin position="105"/>
        <end position="109"/>
    </location>
    <ligand>
        <name>NAD(+)</name>
        <dbReference type="ChEBI" id="CHEBI:57540"/>
    </ligand>
</feature>
<feature type="binding site" evidence="1">
    <location>
        <begin position="129"/>
        <end position="130"/>
    </location>
    <ligand>
        <name>NAD(+)</name>
        <dbReference type="ChEBI" id="CHEBI:57540"/>
    </ligand>
</feature>
<feature type="binding site" evidence="1">
    <location>
        <position position="142"/>
    </location>
    <ligand>
        <name>NAD(+)</name>
        <dbReference type="ChEBI" id="CHEBI:57540"/>
    </ligand>
</feature>
<feature type="binding site" evidence="1">
    <location>
        <position position="151"/>
    </location>
    <ligand>
        <name>NAD(+)</name>
        <dbReference type="ChEBI" id="CHEBI:57540"/>
    </ligand>
</feature>
<feature type="binding site" evidence="1">
    <location>
        <begin position="169"/>
        <end position="172"/>
    </location>
    <ligand>
        <name>NAD(+)</name>
        <dbReference type="ChEBI" id="CHEBI:57540"/>
    </ligand>
</feature>
<feature type="binding site" evidence="1">
    <location>
        <position position="184"/>
    </location>
    <ligand>
        <name>Zn(2+)</name>
        <dbReference type="ChEBI" id="CHEBI:29105"/>
    </ligand>
</feature>
<feature type="binding site" evidence="1">
    <location>
        <position position="247"/>
    </location>
    <ligand>
        <name>Zn(2+)</name>
        <dbReference type="ChEBI" id="CHEBI:29105"/>
    </ligand>
</feature>
<feature type="binding site" evidence="1">
    <location>
        <position position="264"/>
    </location>
    <ligand>
        <name>Zn(2+)</name>
        <dbReference type="ChEBI" id="CHEBI:29105"/>
    </ligand>
</feature>
<protein>
    <recommendedName>
        <fullName evidence="1">3-dehydroquinate synthase</fullName>
        <shortName evidence="1">DHQS</shortName>
        <ecNumber evidence="1">4.2.3.4</ecNumber>
    </recommendedName>
</protein>
<gene>
    <name evidence="1" type="primary">aroB</name>
    <name type="ordered locus">TGRD_193</name>
</gene>
<accession>B1GZJ4</accession>
<proteinExistence type="inferred from homology"/>